<protein>
    <recommendedName>
        <fullName evidence="2">2,3-bisphosphoglycerate-dependent phosphoglycerate mutase 2</fullName>
        <shortName evidence="2">BPG-dependent PGAM 2</shortName>
        <shortName evidence="2">PGAM 2</shortName>
        <shortName evidence="2">Phosphoglyceromutase 2</shortName>
        <shortName evidence="2">dPGM 2</shortName>
        <ecNumber evidence="2">5.4.2.11</ecNumber>
    </recommendedName>
</protein>
<organism>
    <name type="scientific">Arabidopsis thaliana</name>
    <name type="common">Mouse-ear cress</name>
    <dbReference type="NCBI Taxonomy" id="3702"/>
    <lineage>
        <taxon>Eukaryota</taxon>
        <taxon>Viridiplantae</taxon>
        <taxon>Streptophyta</taxon>
        <taxon>Embryophyta</taxon>
        <taxon>Tracheophyta</taxon>
        <taxon>Spermatophyta</taxon>
        <taxon>Magnoliopsida</taxon>
        <taxon>eudicotyledons</taxon>
        <taxon>Gunneridae</taxon>
        <taxon>Pentapetalae</taxon>
        <taxon>rosids</taxon>
        <taxon>malvids</taxon>
        <taxon>Brassicales</taxon>
        <taxon>Brassicaceae</taxon>
        <taxon>Camelineae</taxon>
        <taxon>Arabidopsis</taxon>
    </lineage>
</organism>
<reference key="1">
    <citation type="journal article" date="2000" name="Nature">
        <title>Sequence and analysis of chromosome 1 of the plant Arabidopsis thaliana.</title>
        <authorList>
            <person name="Theologis A."/>
            <person name="Ecker J.R."/>
            <person name="Palm C.J."/>
            <person name="Federspiel N.A."/>
            <person name="Kaul S."/>
            <person name="White O."/>
            <person name="Alonso J."/>
            <person name="Altafi H."/>
            <person name="Araujo R."/>
            <person name="Bowman C.L."/>
            <person name="Brooks S.Y."/>
            <person name="Buehler E."/>
            <person name="Chan A."/>
            <person name="Chao Q."/>
            <person name="Chen H."/>
            <person name="Cheuk R.F."/>
            <person name="Chin C.W."/>
            <person name="Chung M.K."/>
            <person name="Conn L."/>
            <person name="Conway A.B."/>
            <person name="Conway A.R."/>
            <person name="Creasy T.H."/>
            <person name="Dewar K."/>
            <person name="Dunn P."/>
            <person name="Etgu P."/>
            <person name="Feldblyum T.V."/>
            <person name="Feng J.-D."/>
            <person name="Fong B."/>
            <person name="Fujii C.Y."/>
            <person name="Gill J.E."/>
            <person name="Goldsmith A.D."/>
            <person name="Haas B."/>
            <person name="Hansen N.F."/>
            <person name="Hughes B."/>
            <person name="Huizar L."/>
            <person name="Hunter J.L."/>
            <person name="Jenkins J."/>
            <person name="Johnson-Hopson C."/>
            <person name="Khan S."/>
            <person name="Khaykin E."/>
            <person name="Kim C.J."/>
            <person name="Koo H.L."/>
            <person name="Kremenetskaia I."/>
            <person name="Kurtz D.B."/>
            <person name="Kwan A."/>
            <person name="Lam B."/>
            <person name="Langin-Hooper S."/>
            <person name="Lee A."/>
            <person name="Lee J.M."/>
            <person name="Lenz C.A."/>
            <person name="Li J.H."/>
            <person name="Li Y.-P."/>
            <person name="Lin X."/>
            <person name="Liu S.X."/>
            <person name="Liu Z.A."/>
            <person name="Luros J.S."/>
            <person name="Maiti R."/>
            <person name="Marziali A."/>
            <person name="Militscher J."/>
            <person name="Miranda M."/>
            <person name="Nguyen M."/>
            <person name="Nierman W.C."/>
            <person name="Osborne B.I."/>
            <person name="Pai G."/>
            <person name="Peterson J."/>
            <person name="Pham P.K."/>
            <person name="Rizzo M."/>
            <person name="Rooney T."/>
            <person name="Rowley D."/>
            <person name="Sakano H."/>
            <person name="Salzberg S.L."/>
            <person name="Schwartz J.R."/>
            <person name="Shinn P."/>
            <person name="Southwick A.M."/>
            <person name="Sun H."/>
            <person name="Tallon L.J."/>
            <person name="Tambunga G."/>
            <person name="Toriumi M.J."/>
            <person name="Town C.D."/>
            <person name="Utterback T."/>
            <person name="Van Aken S."/>
            <person name="Vaysberg M."/>
            <person name="Vysotskaia V.S."/>
            <person name="Walker M."/>
            <person name="Wu D."/>
            <person name="Yu G."/>
            <person name="Fraser C.M."/>
            <person name="Venter J.C."/>
            <person name="Davis R.W."/>
        </authorList>
    </citation>
    <scope>NUCLEOTIDE SEQUENCE [LARGE SCALE GENOMIC DNA]</scope>
    <source>
        <strain>cv. Columbia</strain>
    </source>
</reference>
<reference key="2">
    <citation type="journal article" date="2017" name="Plant J.">
        <title>Araport11: a complete reannotation of the Arabidopsis thaliana reference genome.</title>
        <authorList>
            <person name="Cheng C.Y."/>
            <person name="Krishnakumar V."/>
            <person name="Chan A.P."/>
            <person name="Thibaud-Nissen F."/>
            <person name="Schobel S."/>
            <person name="Town C.D."/>
        </authorList>
    </citation>
    <scope>GENOME REANNOTATION</scope>
    <source>
        <strain>cv. Columbia</strain>
    </source>
</reference>
<reference key="3">
    <citation type="journal article" date="2002" name="Science">
        <title>Functional annotation of a full-length Arabidopsis cDNA collection.</title>
        <authorList>
            <person name="Seki M."/>
            <person name="Narusaka M."/>
            <person name="Kamiya A."/>
            <person name="Ishida J."/>
            <person name="Satou M."/>
            <person name="Sakurai T."/>
            <person name="Nakajima M."/>
            <person name="Enju A."/>
            <person name="Akiyama K."/>
            <person name="Oono Y."/>
            <person name="Muramatsu M."/>
            <person name="Hayashizaki Y."/>
            <person name="Kawai J."/>
            <person name="Carninci P."/>
            <person name="Itoh M."/>
            <person name="Ishii Y."/>
            <person name="Arakawa T."/>
            <person name="Shibata K."/>
            <person name="Shinagawa A."/>
            <person name="Shinozaki K."/>
        </authorList>
    </citation>
    <scope>NUCLEOTIDE SEQUENCE [LARGE SCALE MRNA] OF 128-332</scope>
    <source>
        <strain>cv. Columbia</strain>
    </source>
</reference>
<reference key="4">
    <citation type="journal article" date="2003" name="Science">
        <title>Empirical analysis of transcriptional activity in the Arabidopsis genome.</title>
        <authorList>
            <person name="Yamada K."/>
            <person name="Lim J."/>
            <person name="Dale J.M."/>
            <person name="Chen H."/>
            <person name="Shinn P."/>
            <person name="Palm C.J."/>
            <person name="Southwick A.M."/>
            <person name="Wu H.C."/>
            <person name="Kim C.J."/>
            <person name="Nguyen M."/>
            <person name="Pham P.K."/>
            <person name="Cheuk R.F."/>
            <person name="Karlin-Newmann G."/>
            <person name="Liu S.X."/>
            <person name="Lam B."/>
            <person name="Sakano H."/>
            <person name="Wu T."/>
            <person name="Yu G."/>
            <person name="Miranda M."/>
            <person name="Quach H.L."/>
            <person name="Tripp M."/>
            <person name="Chang C.H."/>
            <person name="Lee J.M."/>
            <person name="Toriumi M.J."/>
            <person name="Chan M.M."/>
            <person name="Tang C.C."/>
            <person name="Onodera C.S."/>
            <person name="Deng J.M."/>
            <person name="Akiyama K."/>
            <person name="Ansari Y."/>
            <person name="Arakawa T."/>
            <person name="Banh J."/>
            <person name="Banno F."/>
            <person name="Bowser L."/>
            <person name="Brooks S.Y."/>
            <person name="Carninci P."/>
            <person name="Chao Q."/>
            <person name="Choy N."/>
            <person name="Enju A."/>
            <person name="Goldsmith A.D."/>
            <person name="Gurjal M."/>
            <person name="Hansen N.F."/>
            <person name="Hayashizaki Y."/>
            <person name="Johnson-Hopson C."/>
            <person name="Hsuan V.W."/>
            <person name="Iida K."/>
            <person name="Karnes M."/>
            <person name="Khan S."/>
            <person name="Koesema E."/>
            <person name="Ishida J."/>
            <person name="Jiang P.X."/>
            <person name="Jones T."/>
            <person name="Kawai J."/>
            <person name="Kamiya A."/>
            <person name="Meyers C."/>
            <person name="Nakajima M."/>
            <person name="Narusaka M."/>
            <person name="Seki M."/>
            <person name="Sakurai T."/>
            <person name="Satou M."/>
            <person name="Tamse R."/>
            <person name="Vaysberg M."/>
            <person name="Wallender E.K."/>
            <person name="Wong C."/>
            <person name="Yamamura Y."/>
            <person name="Yuan S."/>
            <person name="Shinozaki K."/>
            <person name="Davis R.W."/>
            <person name="Theologis A."/>
            <person name="Ecker J.R."/>
        </authorList>
    </citation>
    <scope>NUCLEOTIDE SEQUENCE [LARGE SCALE MRNA] OF 138-332</scope>
    <source>
        <strain>cv. Columbia</strain>
    </source>
</reference>
<reference key="5">
    <citation type="journal article" date="2004" name="Plant Physiol.">
        <title>Genomic analysis of the nitrate response using a nitrate reductase-null mutant of Arabidopsis.</title>
        <authorList>
            <person name="Wang R."/>
            <person name="Tischner R."/>
            <person name="Gutierrez R.A."/>
            <person name="Hoffman M."/>
            <person name="Xing X."/>
            <person name="Chen M."/>
            <person name="Coruzzi G."/>
            <person name="Crawford N.M."/>
        </authorList>
    </citation>
    <scope>REVIEW</scope>
</reference>
<reference key="6">
    <citation type="journal article" date="2007" name="Plant Physiol.">
        <title>Nitrite acts as a transcriptome signal at micromolar concentrations in Arabidopsis roots.</title>
        <authorList>
            <person name="Wang R."/>
            <person name="Xing X."/>
            <person name="Crawford N."/>
        </authorList>
    </citation>
    <scope>INDUCTION BY NITRITE AND NITRATE</scope>
    <source>
        <strain>cv. Columbia</strain>
    </source>
</reference>
<comment type="function">
    <text evidence="2">Catalyzes the interconversion of 2-phosphoglycerate and 3-phosphoglycerate.</text>
</comment>
<comment type="catalytic activity">
    <reaction evidence="2">
        <text>(2R)-2-phosphoglycerate = (2R)-3-phosphoglycerate</text>
        <dbReference type="Rhea" id="RHEA:15901"/>
        <dbReference type="ChEBI" id="CHEBI:58272"/>
        <dbReference type="ChEBI" id="CHEBI:58289"/>
        <dbReference type="EC" id="5.4.2.11"/>
    </reaction>
</comment>
<comment type="pathway">
    <text evidence="2">Carbohydrate degradation; glycolysis; pyruvate from D-glyceraldehyde 3-phosphate: step 3/5.</text>
</comment>
<comment type="subcellular location">
    <subcellularLocation>
        <location evidence="1">Plastid</location>
        <location evidence="1">Chloroplast</location>
    </subcellularLocation>
</comment>
<comment type="induction">
    <text evidence="3">Highly but transiently induced by nitrite and nitrate.</text>
</comment>
<comment type="similarity">
    <text evidence="2">Belongs to the phosphoglycerate mutase family. BPG-dependent PGAM subfamily.</text>
</comment>
<comment type="sequence caution" evidence="4">
    <conflict type="erroneous gene model prediction">
        <sequence resource="EMBL-CDS" id="AAF17689"/>
    </conflict>
</comment>
<comment type="sequence caution" evidence="4">
    <conflict type="erroneous initiation">
        <sequence resource="EMBL-CDS" id="BAC43054"/>
    </conflict>
    <text>Truncated N-terminus.</text>
</comment>
<sequence>MATSTTMSHQAIGSVVSQRPFKASQFLKEPLNNVPMKFRQKRFKIEATASQISVVDNTFLSPSPSKNKPHESKKKSNEAALILIRHGESLWNEKNLFTGCVDVPLTQKGVGEAIEAGKKISNIPVDLIFTSSLIRAQMTAMLAMTQHRRKKVPIILHNESVKAKTWSHVFSEETRKQSIPVIAAWQLNERMYGELQGLNKKETAERYGTQQVHEWRRSYEIPPPKGESLEMCAERAVAYFEDNIKPELASGNNVMIAAHGNSLRSIIMYLDDLTSQEVTTLDLSTGVPLLYIFKEGKFMKRGSPVGSTEAGVYAYTKRLAQYREKLDAAATI</sequence>
<gene>
    <name evidence="2" type="primary">gpmA2</name>
    <name evidence="5" type="ordered locus">At1g78050</name>
    <name evidence="6" type="ORF">F28K19.30</name>
</gene>
<feature type="transit peptide" description="Chloroplast" evidence="1">
    <location>
        <begin position="1"/>
        <end position="48"/>
    </location>
</feature>
<feature type="chain" id="PRO_0000450720" description="2,3-bisphosphoglycerate-dependent phosphoglycerate mutase 2">
    <location>
        <begin position="49"/>
        <end position="332"/>
    </location>
</feature>
<feature type="active site" description="Tele-phosphohistidine intermediate" evidence="2">
    <location>
        <position position="86"/>
    </location>
</feature>
<feature type="active site" description="Proton donor/acceptor" evidence="2">
    <location>
        <position position="189"/>
    </location>
</feature>
<feature type="binding site" evidence="2">
    <location>
        <begin position="85"/>
        <end position="92"/>
    </location>
    <ligand>
        <name>substrate</name>
    </ligand>
</feature>
<feature type="binding site" evidence="2">
    <location>
        <begin position="98"/>
        <end position="99"/>
    </location>
    <ligand>
        <name>substrate</name>
    </ligand>
</feature>
<feature type="binding site" evidence="2">
    <location>
        <position position="135"/>
    </location>
    <ligand>
        <name>substrate</name>
    </ligand>
</feature>
<feature type="binding site" evidence="2">
    <location>
        <begin position="189"/>
        <end position="192"/>
    </location>
    <ligand>
        <name>substrate</name>
    </ligand>
</feature>
<feature type="binding site" evidence="2">
    <location>
        <position position="200"/>
    </location>
    <ligand>
        <name>substrate</name>
    </ligand>
</feature>
<feature type="binding site" evidence="2">
    <location>
        <begin position="216"/>
        <end position="217"/>
    </location>
    <ligand>
        <name>substrate</name>
    </ligand>
</feature>
<feature type="binding site" evidence="2">
    <location>
        <begin position="260"/>
        <end position="261"/>
    </location>
    <ligand>
        <name>substrate</name>
    </ligand>
</feature>
<feature type="site" description="Transition state stabilizer" evidence="2">
    <location>
        <position position="259"/>
    </location>
</feature>
<accession>F4I8M8</accession>
<accession>Q8GX43</accession>
<accession>Q9SGZ6</accession>
<evidence type="ECO:0000255" key="1"/>
<evidence type="ECO:0000255" key="2">
    <source>
        <dbReference type="HAMAP-Rule" id="MF_01039"/>
    </source>
</evidence>
<evidence type="ECO:0000269" key="3">
    <source>
    </source>
</evidence>
<evidence type="ECO:0000305" key="4"/>
<evidence type="ECO:0000312" key="5">
    <source>
        <dbReference type="Araport" id="AT1G78050"/>
    </source>
</evidence>
<evidence type="ECO:0000312" key="6">
    <source>
        <dbReference type="EMBL" id="AAF17689.1"/>
    </source>
</evidence>
<dbReference type="EC" id="5.4.2.11" evidence="2"/>
<dbReference type="EMBL" id="AC009243">
    <property type="protein sequence ID" value="AAF17689.1"/>
    <property type="status" value="ALT_SEQ"/>
    <property type="molecule type" value="Genomic_DNA"/>
</dbReference>
<dbReference type="EMBL" id="CP002684">
    <property type="protein sequence ID" value="AEE36062.1"/>
    <property type="molecule type" value="Genomic_DNA"/>
</dbReference>
<dbReference type="EMBL" id="AK118445">
    <property type="protein sequence ID" value="BAC43054.1"/>
    <property type="status" value="ALT_INIT"/>
    <property type="molecule type" value="mRNA"/>
</dbReference>
<dbReference type="EMBL" id="BT003728">
    <property type="protein sequence ID" value="AAO39956.1"/>
    <property type="molecule type" value="mRNA"/>
</dbReference>
<dbReference type="PIR" id="F96809">
    <property type="entry name" value="F96809"/>
</dbReference>
<dbReference type="RefSeq" id="NP_177928.2">
    <property type="nucleotide sequence ID" value="NM_106454.4"/>
</dbReference>
<dbReference type="SMR" id="F4I8M8"/>
<dbReference type="FunCoup" id="F4I8M8">
    <property type="interactions" value="1565"/>
</dbReference>
<dbReference type="STRING" id="3702.F4I8M8"/>
<dbReference type="PaxDb" id="3702-AT1G78050.1"/>
<dbReference type="ProteomicsDB" id="212327"/>
<dbReference type="EnsemblPlants" id="AT1G78050.1">
    <property type="protein sequence ID" value="AT1G78050.1"/>
    <property type="gene ID" value="AT1G78050"/>
</dbReference>
<dbReference type="GeneID" id="844140"/>
<dbReference type="Gramene" id="AT1G78050.1">
    <property type="protein sequence ID" value="AT1G78050.1"/>
    <property type="gene ID" value="AT1G78050"/>
</dbReference>
<dbReference type="KEGG" id="ath:AT1G78050"/>
<dbReference type="Araport" id="AT1G78050"/>
<dbReference type="TAIR" id="AT1G78050">
    <property type="gene designation" value="PGM"/>
</dbReference>
<dbReference type="eggNOG" id="KOG0235">
    <property type="taxonomic scope" value="Eukaryota"/>
</dbReference>
<dbReference type="HOGENOM" id="CLU_033323_1_2_1"/>
<dbReference type="InParanoid" id="F4I8M8"/>
<dbReference type="OMA" id="MDDKHPY"/>
<dbReference type="OrthoDB" id="354304at2759"/>
<dbReference type="UniPathway" id="UPA00109">
    <property type="reaction ID" value="UER00186"/>
</dbReference>
<dbReference type="PRO" id="PR:F4I8M8"/>
<dbReference type="Proteomes" id="UP000006548">
    <property type="component" value="Chromosome 1"/>
</dbReference>
<dbReference type="ExpressionAtlas" id="F4I8M8">
    <property type="expression patterns" value="baseline and differential"/>
</dbReference>
<dbReference type="GO" id="GO:0009507">
    <property type="term" value="C:chloroplast"/>
    <property type="evidence" value="ECO:0007669"/>
    <property type="project" value="UniProtKB-SubCell"/>
</dbReference>
<dbReference type="GO" id="GO:0009536">
    <property type="term" value="C:plastid"/>
    <property type="evidence" value="ECO:0007005"/>
    <property type="project" value="TAIR"/>
</dbReference>
<dbReference type="GO" id="GO:0004619">
    <property type="term" value="F:phosphoglycerate mutase activity"/>
    <property type="evidence" value="ECO:0007669"/>
    <property type="project" value="UniProtKB-EC"/>
</dbReference>
<dbReference type="GO" id="GO:0006094">
    <property type="term" value="P:gluconeogenesis"/>
    <property type="evidence" value="ECO:0007669"/>
    <property type="project" value="UniProtKB-KW"/>
</dbReference>
<dbReference type="GO" id="GO:0006096">
    <property type="term" value="P:glycolytic process"/>
    <property type="evidence" value="ECO:0007669"/>
    <property type="project" value="UniProtKB-UniPathway"/>
</dbReference>
<dbReference type="GO" id="GO:0010167">
    <property type="term" value="P:response to nitrate"/>
    <property type="evidence" value="ECO:0000270"/>
    <property type="project" value="UniProtKB"/>
</dbReference>
<dbReference type="GO" id="GO:0080033">
    <property type="term" value="P:response to nitrite"/>
    <property type="evidence" value="ECO:0000270"/>
    <property type="project" value="UniProtKB"/>
</dbReference>
<dbReference type="CDD" id="cd07067">
    <property type="entry name" value="HP_PGM_like"/>
    <property type="match status" value="1"/>
</dbReference>
<dbReference type="FunFam" id="3.40.50.1240:FF:000076">
    <property type="entry name" value="Phosphoglycerate/bisphosphoglycerate mutase"/>
    <property type="match status" value="1"/>
</dbReference>
<dbReference type="Gene3D" id="3.40.50.1240">
    <property type="entry name" value="Phosphoglycerate mutase-like"/>
    <property type="match status" value="1"/>
</dbReference>
<dbReference type="HAMAP" id="MF_01039">
    <property type="entry name" value="PGAM_GpmA"/>
    <property type="match status" value="1"/>
</dbReference>
<dbReference type="InterPro" id="IPR013078">
    <property type="entry name" value="His_Pase_superF_clade-1"/>
</dbReference>
<dbReference type="InterPro" id="IPR029033">
    <property type="entry name" value="His_PPase_superfam"/>
</dbReference>
<dbReference type="InterPro" id="IPR001345">
    <property type="entry name" value="PG/BPGM_mutase_AS"/>
</dbReference>
<dbReference type="InterPro" id="IPR005952">
    <property type="entry name" value="Phosphogly_mut1"/>
</dbReference>
<dbReference type="NCBIfam" id="NF002217">
    <property type="entry name" value="PRK01112.1"/>
    <property type="match status" value="1"/>
</dbReference>
<dbReference type="PANTHER" id="PTHR11931">
    <property type="entry name" value="PHOSPHOGLYCERATE MUTASE"/>
    <property type="match status" value="1"/>
</dbReference>
<dbReference type="Pfam" id="PF00300">
    <property type="entry name" value="His_Phos_1"/>
    <property type="match status" value="2"/>
</dbReference>
<dbReference type="SMART" id="SM00855">
    <property type="entry name" value="PGAM"/>
    <property type="match status" value="1"/>
</dbReference>
<dbReference type="SUPFAM" id="SSF53254">
    <property type="entry name" value="Phosphoglycerate mutase-like"/>
    <property type="match status" value="1"/>
</dbReference>
<dbReference type="PROSITE" id="PS00175">
    <property type="entry name" value="PG_MUTASE"/>
    <property type="match status" value="1"/>
</dbReference>
<proteinExistence type="evidence at transcript level"/>
<name>GPMA2_ARATH</name>
<keyword id="KW-0150">Chloroplast</keyword>
<keyword id="KW-0312">Gluconeogenesis</keyword>
<keyword id="KW-0324">Glycolysis</keyword>
<keyword id="KW-0413">Isomerase</keyword>
<keyword id="KW-0934">Plastid</keyword>
<keyword id="KW-1185">Reference proteome</keyword>
<keyword id="KW-0809">Transit peptide</keyword>